<organism>
    <name type="scientific">Pseudomonas syringae pv. tomato (strain ATCC BAA-871 / DC3000)</name>
    <dbReference type="NCBI Taxonomy" id="223283"/>
    <lineage>
        <taxon>Bacteria</taxon>
        <taxon>Pseudomonadati</taxon>
        <taxon>Pseudomonadota</taxon>
        <taxon>Gammaproteobacteria</taxon>
        <taxon>Pseudomonadales</taxon>
        <taxon>Pseudomonadaceae</taxon>
        <taxon>Pseudomonas</taxon>
    </lineage>
</organism>
<reference key="1">
    <citation type="journal article" date="2003" name="Proc. Natl. Acad. Sci. U.S.A.">
        <title>The complete genome sequence of the Arabidopsis and tomato pathogen Pseudomonas syringae pv. tomato DC3000.</title>
        <authorList>
            <person name="Buell C.R."/>
            <person name="Joardar V."/>
            <person name="Lindeberg M."/>
            <person name="Selengut J."/>
            <person name="Paulsen I.T."/>
            <person name="Gwinn M.L."/>
            <person name="Dodson R.J."/>
            <person name="DeBoy R.T."/>
            <person name="Durkin A.S."/>
            <person name="Kolonay J.F."/>
            <person name="Madupu R."/>
            <person name="Daugherty S.C."/>
            <person name="Brinkac L.M."/>
            <person name="Beanan M.J."/>
            <person name="Haft D.H."/>
            <person name="Nelson W.C."/>
            <person name="Davidsen T.M."/>
            <person name="Zafar N."/>
            <person name="Zhou L."/>
            <person name="Liu J."/>
            <person name="Yuan Q."/>
            <person name="Khouri H.M."/>
            <person name="Fedorova N.B."/>
            <person name="Tran B."/>
            <person name="Russell D."/>
            <person name="Berry K.J."/>
            <person name="Utterback T.R."/>
            <person name="Van Aken S.E."/>
            <person name="Feldblyum T.V."/>
            <person name="D'Ascenzo M."/>
            <person name="Deng W.-L."/>
            <person name="Ramos A.R."/>
            <person name="Alfano J.R."/>
            <person name="Cartinhour S."/>
            <person name="Chatterjee A.K."/>
            <person name="Delaney T.P."/>
            <person name="Lazarowitz S.G."/>
            <person name="Martin G.B."/>
            <person name="Schneider D.J."/>
            <person name="Tang X."/>
            <person name="Bender C.L."/>
            <person name="White O."/>
            <person name="Fraser C.M."/>
            <person name="Collmer A."/>
        </authorList>
    </citation>
    <scope>NUCLEOTIDE SEQUENCE [LARGE SCALE GENOMIC DNA]</scope>
    <source>
        <strain>ATCC BAA-871 / DC3000</strain>
    </source>
</reference>
<sequence length="277" mass="31133">MQHERPTHGMNIPALRRRKQVLDLAEETVAIEVPGLSLFYGDKQALFDIALNIPKQKVTSFIGPSGCGKSTLLRSFNRMNDLVDGCRVEGAINLYGHNIYTKGEEVAELRRRVGMVFQKPNPFPKTIYENVVYGLRIQGINKKRVLDEAVAWALKAAALWDEVKDRLHESALGLSGGQQQRLVIARTIAVEPEVLLLDEPCSALDPISTLKVEELIYELKSKYTIVIVTHNMQQAARVSDYTAFMYMGKLVEFGDTDTLFTNPAKKQTEDYITGRYG</sequence>
<proteinExistence type="inferred from homology"/>
<protein>
    <recommendedName>
        <fullName evidence="1">Phosphate import ATP-binding protein PstB 2</fullName>
        <ecNumber evidence="1">7.3.2.1</ecNumber>
    </recommendedName>
    <alternativeName>
        <fullName evidence="1">ABC phosphate transporter 2</fullName>
    </alternativeName>
    <alternativeName>
        <fullName evidence="1">Phosphate-transporting ATPase 2</fullName>
    </alternativeName>
</protein>
<name>PSTB2_PSESM</name>
<accession>Q87U31</accession>
<evidence type="ECO:0000255" key="1">
    <source>
        <dbReference type="HAMAP-Rule" id="MF_01702"/>
    </source>
</evidence>
<gene>
    <name evidence="1" type="primary">pstB2</name>
    <name type="synonym">pstB-2</name>
    <name type="ordered locus">PSPTO_5484</name>
</gene>
<comment type="function">
    <text evidence="1">Part of the ABC transporter complex PstSACB involved in phosphate import. Responsible for energy coupling to the transport system.</text>
</comment>
<comment type="catalytic activity">
    <reaction evidence="1">
        <text>phosphate(out) + ATP + H2O = ADP + 2 phosphate(in) + H(+)</text>
        <dbReference type="Rhea" id="RHEA:24440"/>
        <dbReference type="ChEBI" id="CHEBI:15377"/>
        <dbReference type="ChEBI" id="CHEBI:15378"/>
        <dbReference type="ChEBI" id="CHEBI:30616"/>
        <dbReference type="ChEBI" id="CHEBI:43474"/>
        <dbReference type="ChEBI" id="CHEBI:456216"/>
        <dbReference type="EC" id="7.3.2.1"/>
    </reaction>
</comment>
<comment type="subunit">
    <text evidence="1">The complex is composed of two ATP-binding proteins (PstB), two transmembrane proteins (PstC and PstA) and a solute-binding protein (PstS).</text>
</comment>
<comment type="subcellular location">
    <subcellularLocation>
        <location evidence="1">Cell inner membrane</location>
        <topology evidence="1">Peripheral membrane protein</topology>
    </subcellularLocation>
</comment>
<comment type="similarity">
    <text evidence="1">Belongs to the ABC transporter superfamily. Phosphate importer (TC 3.A.1.7) family.</text>
</comment>
<keyword id="KW-0067">ATP-binding</keyword>
<keyword id="KW-0997">Cell inner membrane</keyword>
<keyword id="KW-1003">Cell membrane</keyword>
<keyword id="KW-0472">Membrane</keyword>
<keyword id="KW-0547">Nucleotide-binding</keyword>
<keyword id="KW-0592">Phosphate transport</keyword>
<keyword id="KW-1185">Reference proteome</keyword>
<keyword id="KW-1278">Translocase</keyword>
<keyword id="KW-0813">Transport</keyword>
<dbReference type="EC" id="7.3.2.1" evidence="1"/>
<dbReference type="EMBL" id="AE016853">
    <property type="protein sequence ID" value="AAO58903.1"/>
    <property type="molecule type" value="Genomic_DNA"/>
</dbReference>
<dbReference type="RefSeq" id="NP_795208.1">
    <property type="nucleotide sequence ID" value="NC_004578.1"/>
</dbReference>
<dbReference type="SMR" id="Q87U31"/>
<dbReference type="STRING" id="223283.PSPTO_5484"/>
<dbReference type="GeneID" id="1187176"/>
<dbReference type="KEGG" id="pst:PSPTO_5484"/>
<dbReference type="PATRIC" id="fig|223283.9.peg.5620"/>
<dbReference type="eggNOG" id="COG1117">
    <property type="taxonomic scope" value="Bacteria"/>
</dbReference>
<dbReference type="HOGENOM" id="CLU_000604_1_22_6"/>
<dbReference type="OrthoDB" id="9802264at2"/>
<dbReference type="PhylomeDB" id="Q87U31"/>
<dbReference type="Proteomes" id="UP000002515">
    <property type="component" value="Chromosome"/>
</dbReference>
<dbReference type="GO" id="GO:0005886">
    <property type="term" value="C:plasma membrane"/>
    <property type="evidence" value="ECO:0007669"/>
    <property type="project" value="UniProtKB-SubCell"/>
</dbReference>
<dbReference type="GO" id="GO:0005524">
    <property type="term" value="F:ATP binding"/>
    <property type="evidence" value="ECO:0007669"/>
    <property type="project" value="UniProtKB-KW"/>
</dbReference>
<dbReference type="GO" id="GO:0016887">
    <property type="term" value="F:ATP hydrolysis activity"/>
    <property type="evidence" value="ECO:0007669"/>
    <property type="project" value="InterPro"/>
</dbReference>
<dbReference type="GO" id="GO:0015415">
    <property type="term" value="F:ATPase-coupled phosphate ion transmembrane transporter activity"/>
    <property type="evidence" value="ECO:0007669"/>
    <property type="project" value="UniProtKB-EC"/>
</dbReference>
<dbReference type="GO" id="GO:0035435">
    <property type="term" value="P:phosphate ion transmembrane transport"/>
    <property type="evidence" value="ECO:0007669"/>
    <property type="project" value="InterPro"/>
</dbReference>
<dbReference type="CDD" id="cd03260">
    <property type="entry name" value="ABC_PstB_phosphate_transporter"/>
    <property type="match status" value="1"/>
</dbReference>
<dbReference type="FunFam" id="3.40.50.300:FF:000132">
    <property type="entry name" value="Phosphate import ATP-binding protein PstB"/>
    <property type="match status" value="1"/>
</dbReference>
<dbReference type="Gene3D" id="3.40.50.300">
    <property type="entry name" value="P-loop containing nucleotide triphosphate hydrolases"/>
    <property type="match status" value="1"/>
</dbReference>
<dbReference type="InterPro" id="IPR003593">
    <property type="entry name" value="AAA+_ATPase"/>
</dbReference>
<dbReference type="InterPro" id="IPR003439">
    <property type="entry name" value="ABC_transporter-like_ATP-bd"/>
</dbReference>
<dbReference type="InterPro" id="IPR017871">
    <property type="entry name" value="ABC_transporter-like_CS"/>
</dbReference>
<dbReference type="InterPro" id="IPR027417">
    <property type="entry name" value="P-loop_NTPase"/>
</dbReference>
<dbReference type="InterPro" id="IPR005670">
    <property type="entry name" value="PstB-like"/>
</dbReference>
<dbReference type="NCBIfam" id="TIGR00972">
    <property type="entry name" value="3a0107s01c2"/>
    <property type="match status" value="1"/>
</dbReference>
<dbReference type="PANTHER" id="PTHR43423">
    <property type="entry name" value="ABC TRANSPORTER I FAMILY MEMBER 17"/>
    <property type="match status" value="1"/>
</dbReference>
<dbReference type="PANTHER" id="PTHR43423:SF12">
    <property type="entry name" value="IRON EXPORT ATP-BINDING PROTEIN FETA-RELATED"/>
    <property type="match status" value="1"/>
</dbReference>
<dbReference type="Pfam" id="PF00005">
    <property type="entry name" value="ABC_tran"/>
    <property type="match status" value="1"/>
</dbReference>
<dbReference type="SMART" id="SM00382">
    <property type="entry name" value="AAA"/>
    <property type="match status" value="1"/>
</dbReference>
<dbReference type="SUPFAM" id="SSF52540">
    <property type="entry name" value="P-loop containing nucleoside triphosphate hydrolases"/>
    <property type="match status" value="1"/>
</dbReference>
<dbReference type="PROSITE" id="PS00211">
    <property type="entry name" value="ABC_TRANSPORTER_1"/>
    <property type="match status" value="1"/>
</dbReference>
<dbReference type="PROSITE" id="PS50893">
    <property type="entry name" value="ABC_TRANSPORTER_2"/>
    <property type="match status" value="1"/>
</dbReference>
<dbReference type="PROSITE" id="PS51238">
    <property type="entry name" value="PSTB"/>
    <property type="match status" value="1"/>
</dbReference>
<feature type="chain" id="PRO_0000092866" description="Phosphate import ATP-binding protein PstB 2">
    <location>
        <begin position="1"/>
        <end position="277"/>
    </location>
</feature>
<feature type="domain" description="ABC transporter" evidence="1">
    <location>
        <begin position="31"/>
        <end position="272"/>
    </location>
</feature>
<feature type="binding site" evidence="1">
    <location>
        <begin position="63"/>
        <end position="70"/>
    </location>
    <ligand>
        <name>ATP</name>
        <dbReference type="ChEBI" id="CHEBI:30616"/>
    </ligand>
</feature>